<evidence type="ECO:0000255" key="1">
    <source>
        <dbReference type="HAMAP-Rule" id="MF_00227"/>
    </source>
</evidence>
<gene>
    <name evidence="1" type="primary">rnpA</name>
    <name type="ordered locus">spyM18_0228</name>
</gene>
<proteinExistence type="inferred from homology"/>
<sequence>MKKTYRVKREKDFQAIFKDGKSTANRKFVIYHLNRGQDHFRVGISVGKKIGNAVTRNAVKRKIRHVIMALGHQLKSEDFVVIARKGVESLEYQELQQNLHHVLKLAQLLEKGFESEEKH</sequence>
<reference key="1">
    <citation type="journal article" date="2002" name="Proc. Natl. Acad. Sci. U.S.A.">
        <title>Genome sequence and comparative microarray analysis of serotype M18 group A Streptococcus strains associated with acute rheumatic fever outbreaks.</title>
        <authorList>
            <person name="Smoot J.C."/>
            <person name="Barbian K.D."/>
            <person name="Van Gompel J.J."/>
            <person name="Smoot L.M."/>
            <person name="Chaussee M.S."/>
            <person name="Sylva G.L."/>
            <person name="Sturdevant D.E."/>
            <person name="Ricklefs S.M."/>
            <person name="Porcella S.F."/>
            <person name="Parkins L.D."/>
            <person name="Beres S.B."/>
            <person name="Campbell D.S."/>
            <person name="Smith T.M."/>
            <person name="Zhang Q."/>
            <person name="Kapur V."/>
            <person name="Daly J.A."/>
            <person name="Veasy L.G."/>
            <person name="Musser J.M."/>
        </authorList>
    </citation>
    <scope>NUCLEOTIDE SEQUENCE [LARGE SCALE GENOMIC DNA]</scope>
    <source>
        <strain>MGAS8232</strain>
    </source>
</reference>
<organism>
    <name type="scientific">Streptococcus pyogenes serotype M18 (strain MGAS8232)</name>
    <dbReference type="NCBI Taxonomy" id="186103"/>
    <lineage>
        <taxon>Bacteria</taxon>
        <taxon>Bacillati</taxon>
        <taxon>Bacillota</taxon>
        <taxon>Bacilli</taxon>
        <taxon>Lactobacillales</taxon>
        <taxon>Streptococcaceae</taxon>
        <taxon>Streptococcus</taxon>
    </lineage>
</organism>
<dbReference type="EC" id="3.1.26.5" evidence="1"/>
<dbReference type="EMBL" id="AE009949">
    <property type="protein sequence ID" value="AAL97014.1"/>
    <property type="molecule type" value="Genomic_DNA"/>
</dbReference>
<dbReference type="RefSeq" id="WP_002992035.1">
    <property type="nucleotide sequence ID" value="NC_003485.1"/>
</dbReference>
<dbReference type="SMR" id="P66691"/>
<dbReference type="GeneID" id="69900175"/>
<dbReference type="KEGG" id="spm:spyM18_0228"/>
<dbReference type="HOGENOM" id="CLU_117179_9_1_9"/>
<dbReference type="GO" id="GO:0030677">
    <property type="term" value="C:ribonuclease P complex"/>
    <property type="evidence" value="ECO:0007669"/>
    <property type="project" value="TreeGrafter"/>
</dbReference>
<dbReference type="GO" id="GO:0042781">
    <property type="term" value="F:3'-tRNA processing endoribonuclease activity"/>
    <property type="evidence" value="ECO:0007669"/>
    <property type="project" value="TreeGrafter"/>
</dbReference>
<dbReference type="GO" id="GO:0004526">
    <property type="term" value="F:ribonuclease P activity"/>
    <property type="evidence" value="ECO:0007669"/>
    <property type="project" value="UniProtKB-UniRule"/>
</dbReference>
<dbReference type="GO" id="GO:0000049">
    <property type="term" value="F:tRNA binding"/>
    <property type="evidence" value="ECO:0007669"/>
    <property type="project" value="UniProtKB-UniRule"/>
</dbReference>
<dbReference type="GO" id="GO:0001682">
    <property type="term" value="P:tRNA 5'-leader removal"/>
    <property type="evidence" value="ECO:0007669"/>
    <property type="project" value="UniProtKB-UniRule"/>
</dbReference>
<dbReference type="FunFam" id="3.30.230.10:FF:000021">
    <property type="entry name" value="Ribonuclease P protein component"/>
    <property type="match status" value="1"/>
</dbReference>
<dbReference type="Gene3D" id="3.30.230.10">
    <property type="match status" value="1"/>
</dbReference>
<dbReference type="HAMAP" id="MF_00227">
    <property type="entry name" value="RNase_P"/>
    <property type="match status" value="1"/>
</dbReference>
<dbReference type="InterPro" id="IPR020568">
    <property type="entry name" value="Ribosomal_Su5_D2-typ_SF"/>
</dbReference>
<dbReference type="InterPro" id="IPR014721">
    <property type="entry name" value="Ribsml_uS5_D2-typ_fold_subgr"/>
</dbReference>
<dbReference type="InterPro" id="IPR000100">
    <property type="entry name" value="RNase_P"/>
</dbReference>
<dbReference type="InterPro" id="IPR020539">
    <property type="entry name" value="RNase_P_CS"/>
</dbReference>
<dbReference type="NCBIfam" id="TIGR00188">
    <property type="entry name" value="rnpA"/>
    <property type="match status" value="1"/>
</dbReference>
<dbReference type="PANTHER" id="PTHR33992">
    <property type="entry name" value="RIBONUCLEASE P PROTEIN COMPONENT"/>
    <property type="match status" value="1"/>
</dbReference>
<dbReference type="PANTHER" id="PTHR33992:SF1">
    <property type="entry name" value="RIBONUCLEASE P PROTEIN COMPONENT"/>
    <property type="match status" value="1"/>
</dbReference>
<dbReference type="Pfam" id="PF00825">
    <property type="entry name" value="Ribonuclease_P"/>
    <property type="match status" value="1"/>
</dbReference>
<dbReference type="SUPFAM" id="SSF54211">
    <property type="entry name" value="Ribosomal protein S5 domain 2-like"/>
    <property type="match status" value="1"/>
</dbReference>
<dbReference type="PROSITE" id="PS00648">
    <property type="entry name" value="RIBONUCLEASE_P"/>
    <property type="match status" value="1"/>
</dbReference>
<protein>
    <recommendedName>
        <fullName evidence="1">Ribonuclease P protein component</fullName>
        <shortName evidence="1">RNase P protein</shortName>
        <shortName evidence="1">RNaseP protein</shortName>
        <ecNumber evidence="1">3.1.26.5</ecNumber>
    </recommendedName>
    <alternativeName>
        <fullName evidence="1">Protein C5</fullName>
    </alternativeName>
</protein>
<accession>P66691</accession>
<accession>Q8P2P9</accession>
<keyword id="KW-0255">Endonuclease</keyword>
<keyword id="KW-0378">Hydrolase</keyword>
<keyword id="KW-0540">Nuclease</keyword>
<keyword id="KW-0694">RNA-binding</keyword>
<keyword id="KW-0819">tRNA processing</keyword>
<comment type="function">
    <text evidence="1">RNaseP catalyzes the removal of the 5'-leader sequence from pre-tRNA to produce the mature 5'-terminus. It can also cleave other RNA substrates such as 4.5S RNA. The protein component plays an auxiliary but essential role in vivo by binding to the 5'-leader sequence and broadening the substrate specificity of the ribozyme.</text>
</comment>
<comment type="catalytic activity">
    <reaction evidence="1">
        <text>Endonucleolytic cleavage of RNA, removing 5'-extranucleotides from tRNA precursor.</text>
        <dbReference type="EC" id="3.1.26.5"/>
    </reaction>
</comment>
<comment type="subunit">
    <text evidence="1">Consists of a catalytic RNA component (M1 or rnpB) and a protein subunit.</text>
</comment>
<comment type="similarity">
    <text evidence="1">Belongs to the RnpA family.</text>
</comment>
<name>RNPA_STRP8</name>
<feature type="chain" id="PRO_0000198545" description="Ribonuclease P protein component">
    <location>
        <begin position="1"/>
        <end position="119"/>
    </location>
</feature>